<sequence length="134" mass="14415">MSWQAYVDDHLMCDIEGHEGHRLTAAAIVGHDGSVWAQSATFPQFKPEEMNGIMTDFNEPGHLAPTGLHLGGTKYMVIQGEAGAVIRGKKGSGGITTKKTGQALVFGIYEEPVTPGQCNMVVERLGDYLLEQGL</sequence>
<accession>A4GE45</accession>
<dbReference type="EMBL" id="DQ317570">
    <property type="protein sequence ID" value="ABC47413.1"/>
    <property type="molecule type" value="mRNA"/>
</dbReference>
<dbReference type="SMR" id="A4GE45"/>
<dbReference type="Allergome" id="490">
    <property type="allergen name" value="Ole e 2"/>
</dbReference>
<dbReference type="GO" id="GO:0005938">
    <property type="term" value="C:cell cortex"/>
    <property type="evidence" value="ECO:0007669"/>
    <property type="project" value="TreeGrafter"/>
</dbReference>
<dbReference type="GO" id="GO:0005856">
    <property type="term" value="C:cytoskeleton"/>
    <property type="evidence" value="ECO:0007669"/>
    <property type="project" value="UniProtKB-SubCell"/>
</dbReference>
<dbReference type="GO" id="GO:0003785">
    <property type="term" value="F:actin monomer binding"/>
    <property type="evidence" value="ECO:0007669"/>
    <property type="project" value="TreeGrafter"/>
</dbReference>
<dbReference type="CDD" id="cd00148">
    <property type="entry name" value="PROF"/>
    <property type="match status" value="1"/>
</dbReference>
<dbReference type="FunFam" id="3.30.450.30:FF:000001">
    <property type="entry name" value="Profilin"/>
    <property type="match status" value="1"/>
</dbReference>
<dbReference type="Gene3D" id="3.30.450.30">
    <property type="entry name" value="Dynein light chain 2a, cytoplasmic"/>
    <property type="match status" value="1"/>
</dbReference>
<dbReference type="InterPro" id="IPR048278">
    <property type="entry name" value="PFN"/>
</dbReference>
<dbReference type="InterPro" id="IPR005455">
    <property type="entry name" value="PFN_euk"/>
</dbReference>
<dbReference type="InterPro" id="IPR036140">
    <property type="entry name" value="PFN_sf"/>
</dbReference>
<dbReference type="InterPro" id="IPR027310">
    <property type="entry name" value="Profilin_CS"/>
</dbReference>
<dbReference type="PANTHER" id="PTHR11604">
    <property type="entry name" value="PROFILIN"/>
    <property type="match status" value="1"/>
</dbReference>
<dbReference type="PANTHER" id="PTHR11604:SF25">
    <property type="entry name" value="PROFILIN-5"/>
    <property type="match status" value="1"/>
</dbReference>
<dbReference type="Pfam" id="PF00235">
    <property type="entry name" value="Profilin"/>
    <property type="match status" value="1"/>
</dbReference>
<dbReference type="PRINTS" id="PR00392">
    <property type="entry name" value="PROFILIN"/>
</dbReference>
<dbReference type="PRINTS" id="PR01640">
    <property type="entry name" value="PROFILINPLNT"/>
</dbReference>
<dbReference type="SMART" id="SM00392">
    <property type="entry name" value="PROF"/>
    <property type="match status" value="1"/>
</dbReference>
<dbReference type="SUPFAM" id="SSF55770">
    <property type="entry name" value="Profilin (actin-binding protein)"/>
    <property type="match status" value="1"/>
</dbReference>
<dbReference type="PROSITE" id="PS00414">
    <property type="entry name" value="PROFILIN"/>
    <property type="match status" value="1"/>
</dbReference>
<reference key="1">
    <citation type="journal article" date="2012" name="PLoS ONE">
        <title>Characterization of profilin polymorphism in pollen with a focus on multifunctionality.</title>
        <authorList>
            <person name="Jimenez-Lopez J.C."/>
            <person name="Morales S."/>
            <person name="Castro A.J."/>
            <person name="Volkmann D."/>
            <person name="Rodriguez-Garcia M.I."/>
            <person name="Alche Jde D."/>
        </authorList>
    </citation>
    <scope>NUCLEOTIDE SEQUENCE [MRNA]</scope>
    <scope>POLYMORPHISM</scope>
    <source>
        <strain>cv. Galega</strain>
        <tissue>Pollen</tissue>
    </source>
</reference>
<reference key="2">
    <citation type="journal article" date="2013" name="PLoS ONE">
        <title>Analysis of the effects of polymorphism on pollen profilin structural functionality and the generation of conformational, T- and B-cell epitopes.</title>
        <authorList>
            <person name="Jimenez-Lopez J.C."/>
            <person name="Rodriguez-Garcia M.I."/>
            <person name="Alche J.D."/>
        </authorList>
    </citation>
    <scope>3D-STRUCTURE MODELING</scope>
    <scope>DISULFIDE BOND</scope>
</reference>
<organism>
    <name type="scientific">Olea europaea</name>
    <name type="common">Common olive</name>
    <dbReference type="NCBI Taxonomy" id="4146"/>
    <lineage>
        <taxon>Eukaryota</taxon>
        <taxon>Viridiplantae</taxon>
        <taxon>Streptophyta</taxon>
        <taxon>Embryophyta</taxon>
        <taxon>Tracheophyta</taxon>
        <taxon>Spermatophyta</taxon>
        <taxon>Magnoliopsida</taxon>
        <taxon>eudicotyledons</taxon>
        <taxon>Gunneridae</taxon>
        <taxon>Pentapetalae</taxon>
        <taxon>asterids</taxon>
        <taxon>lamiids</taxon>
        <taxon>Lamiales</taxon>
        <taxon>Oleaceae</taxon>
        <taxon>Oleeae</taxon>
        <taxon>Olea</taxon>
    </lineage>
</organism>
<protein>
    <recommendedName>
        <fullName>Profilin-1</fullName>
    </recommendedName>
    <alternativeName>
        <fullName>Pollen allergen Ole e 2</fullName>
    </alternativeName>
    <allergenName>Ole e 2</allergenName>
</protein>
<proteinExistence type="evidence at protein level"/>
<feature type="initiator methionine" description="Removed" evidence="1">
    <location>
        <position position="1"/>
    </location>
</feature>
<feature type="chain" id="PRO_0000425036" description="Profilin-1">
    <location>
        <begin position="2"/>
        <end position="134"/>
    </location>
</feature>
<feature type="short sequence motif" description="Involved in PIP2 interaction">
    <location>
        <begin position="84"/>
        <end position="100"/>
    </location>
</feature>
<feature type="modified residue" description="Phosphothreonine" evidence="1">
    <location>
        <position position="114"/>
    </location>
</feature>
<feature type="disulfide bond" evidence="3">
    <location>
        <begin position="13"/>
        <end position="118"/>
    </location>
</feature>
<keyword id="KW-0009">Actin-binding</keyword>
<keyword id="KW-0020">Allergen</keyword>
<keyword id="KW-0963">Cytoplasm</keyword>
<keyword id="KW-0206">Cytoskeleton</keyword>
<keyword id="KW-1015">Disulfide bond</keyword>
<keyword id="KW-0597">Phosphoprotein</keyword>
<comment type="function">
    <text evidence="1">Binds to actin and affects the structure of the cytoskeleton. At high concentrations, profilin prevents the polymerization of actin, whereas it enhances it at low concentrations (By similarity).</text>
</comment>
<comment type="subunit">
    <text evidence="1">Occurs in many kinds of cells as a complex with monomeric actin in a 1:1 ratio.</text>
</comment>
<comment type="subcellular location">
    <subcellularLocation>
        <location evidence="1">Cytoplasm</location>
        <location evidence="1">Cytoskeleton</location>
    </subcellularLocation>
</comment>
<comment type="PTM">
    <text evidence="1">Phosphorylated by MAP kinases.</text>
</comment>
<comment type="polymorphism">
    <text>Several isoforms of the allergen exist due to polymorphism.</text>
</comment>
<comment type="allergen">
    <text>Causes an allergic reaction in human.</text>
</comment>
<comment type="miscellaneous">
    <text evidence="3">The variability of the residues taking part of IgE-binding epitopes might be responsible of the difference in cross-reactivity among olive pollen cultivars, and between distantly related pollen species, leading to a variable range of allergy reactions among atopic patients.</text>
</comment>
<comment type="similarity">
    <text evidence="2">Belongs to the profilin family.</text>
</comment>
<evidence type="ECO:0000250" key="1"/>
<evidence type="ECO:0000305" key="2"/>
<evidence type="ECO:0000305" key="3">
    <source>
    </source>
</evidence>
<name>PROBS_OLEEU</name>